<organism>
    <name type="scientific">Human herpesvirus 7 (strain JI)</name>
    <name type="common">HHV-7</name>
    <name type="synonym">Human T lymphotropic virus</name>
    <dbReference type="NCBI Taxonomy" id="57278"/>
    <lineage>
        <taxon>Viruses</taxon>
        <taxon>Duplodnaviria</taxon>
        <taxon>Heunggongvirae</taxon>
        <taxon>Peploviricota</taxon>
        <taxon>Herviviricetes</taxon>
        <taxon>Herpesvirales</taxon>
        <taxon>Orthoherpesviridae</taxon>
        <taxon>Betaherpesvirinae</taxon>
        <taxon>Roseolovirus</taxon>
        <taxon>Roseolovirus humanbeta7</taxon>
        <taxon>Human betaherpesvirus 7</taxon>
    </lineage>
</organism>
<keyword id="KW-0167">Capsid protein</keyword>
<keyword id="KW-1048">Host nucleus</keyword>
<keyword id="KW-1185">Reference proteome</keyword>
<keyword id="KW-0946">Virion</keyword>
<gene>
    <name evidence="1" type="primary">TRX1</name>
    <name type="ordered locus">U29</name>
</gene>
<organismHost>
    <name type="scientific">Homo sapiens</name>
    <name type="common">Human</name>
    <dbReference type="NCBI Taxonomy" id="9606"/>
</organismHost>
<accession>P52349</accession>
<evidence type="ECO:0000255" key="1">
    <source>
        <dbReference type="HAMAP-Rule" id="MF_04018"/>
    </source>
</evidence>
<comment type="function">
    <text evidence="1">Structural component of the T=16 icosahedral capsid. The capsid is composed of pentamers and hexamers of major capsid protein/MCP, which are linked together by heterotrimers called triplexes. These triplexes are formed by a single molecule of triplex protein 1/TRX1 and two copies of triplex protein 2/TRX2. Additionally, TRX1 is required for efficient transport of TRX2 to the nucleus, which is the site of capsid assembly.</text>
</comment>
<comment type="subunit">
    <text evidence="1">Interacts with TRX2, MCP and capsid vertex component 2/CVC2.</text>
</comment>
<comment type="subcellular location">
    <subcellularLocation>
        <location evidence="1">Virion</location>
    </subcellularLocation>
    <subcellularLocation>
        <location evidence="1">Host nucleus</location>
    </subcellularLocation>
</comment>
<comment type="similarity">
    <text evidence="1">Belongs to the herpesviridae TRX1 protein family.</text>
</comment>
<name>TRX1_HHV7J</name>
<protein>
    <recommendedName>
        <fullName evidence="1">Triplex capsid protein 1</fullName>
    </recommendedName>
</protein>
<sequence length="286" mass="33112">MEMLQKRKHQTIDETSLNNLIENEKKKIKSLLAFGVPKECVLSRSFTPCELLGPERDHLGMLMFRLETDAESPKFLLISVLFLAMNAFNVSFCTRTSLANLYKTSLVDSINTMLDSCSYLEEKVSLFGVTNYISQGTNCLISCVMQGHVYDVRKENIYGLVILKDLLLEPDWEPRQNAIQYIYLCYIYRQAFNKIEYGIYIVLSELTHEEVLIDLLRNKFSKERFMFMNYLINGDGNLNYFGSLQRIGHCKTQNIKSGILDLQGISLTIIRLKDVFVELCERKIFL</sequence>
<proteinExistence type="inferred from homology"/>
<feature type="chain" id="PRO_0000115720" description="Triplex capsid protein 1">
    <location>
        <begin position="1"/>
        <end position="286"/>
    </location>
</feature>
<reference key="1">
    <citation type="journal article" date="1996" name="J. Virol.">
        <title>Determination and analysis of the complete nucleotide sequence of human herpesvirus.</title>
        <authorList>
            <person name="Nicholas J."/>
        </authorList>
    </citation>
    <scope>NUCLEOTIDE SEQUENCE [LARGE SCALE GENOMIC DNA]</scope>
</reference>
<dbReference type="EMBL" id="U43400">
    <property type="protein sequence ID" value="AAC54691.1"/>
    <property type="molecule type" value="Genomic_DNA"/>
</dbReference>
<dbReference type="PIR" id="T41931">
    <property type="entry name" value="T41931"/>
</dbReference>
<dbReference type="SMR" id="P52349"/>
<dbReference type="Proteomes" id="UP000009246">
    <property type="component" value="Segment"/>
</dbReference>
<dbReference type="GO" id="GO:0042025">
    <property type="term" value="C:host cell nucleus"/>
    <property type="evidence" value="ECO:0007669"/>
    <property type="project" value="UniProtKB-SubCell"/>
</dbReference>
<dbReference type="GO" id="GO:0019028">
    <property type="term" value="C:viral capsid"/>
    <property type="evidence" value="ECO:0007669"/>
    <property type="project" value="UniProtKB-KW"/>
</dbReference>
<dbReference type="GO" id="GO:0003677">
    <property type="term" value="F:DNA binding"/>
    <property type="evidence" value="ECO:0007669"/>
    <property type="project" value="InterPro"/>
</dbReference>
<dbReference type="GO" id="GO:0019069">
    <property type="term" value="P:viral capsid assembly"/>
    <property type="evidence" value="ECO:0007669"/>
    <property type="project" value="InterPro"/>
</dbReference>
<dbReference type="HAMAP" id="MF_04018">
    <property type="entry name" value="HSV_TRX1"/>
    <property type="match status" value="1"/>
</dbReference>
<dbReference type="InterPro" id="IPR004999">
    <property type="entry name" value="Herpes_1"/>
</dbReference>
<dbReference type="Pfam" id="PF03327">
    <property type="entry name" value="Herpes_VP19C"/>
    <property type="match status" value="1"/>
</dbReference>